<comment type="function">
    <text evidence="1">The H2 subclass of histamine receptors mediates gastric acid secretion. Also appears to regulate gastrointestinal motility and intestinal secretion. Possible role in regulating cell growth and differentiation. The activity of this receptor is mediated by G proteins which activate adenylyl cyclase and, through a separate G protein-dependent mechanism, the phosphoinositide/protein kinase (PKC) signaling pathway (By similarity).</text>
</comment>
<comment type="subcellular location">
    <subcellularLocation>
        <location>Cell membrane</location>
        <topology>Multi-pass membrane protein</topology>
    </subcellularLocation>
</comment>
<comment type="similarity">
    <text evidence="3">Belongs to the G-protein coupled receptor 1 family.</text>
</comment>
<gene>
    <name type="primary">HRH2</name>
</gene>
<dbReference type="EMBL" id="AB041386">
    <property type="protein sequence ID" value="BAA94471.1"/>
    <property type="molecule type" value="Genomic_DNA"/>
</dbReference>
<dbReference type="SMR" id="Q76MS7"/>
<dbReference type="FunCoup" id="Q76MS7">
    <property type="interactions" value="936"/>
</dbReference>
<dbReference type="STRING" id="9593.ENSGGOP00000030583"/>
<dbReference type="GlyCosmos" id="Q76MS7">
    <property type="glycosylation" value="1 site, No reported glycans"/>
</dbReference>
<dbReference type="eggNOG" id="KOG3656">
    <property type="taxonomic scope" value="Eukaryota"/>
</dbReference>
<dbReference type="HOGENOM" id="CLU_009579_11_0_1"/>
<dbReference type="InParanoid" id="Q76MS7"/>
<dbReference type="Proteomes" id="UP000001519">
    <property type="component" value="Unplaced"/>
</dbReference>
<dbReference type="GO" id="GO:0030425">
    <property type="term" value="C:dendrite"/>
    <property type="evidence" value="ECO:0000318"/>
    <property type="project" value="GO_Central"/>
</dbReference>
<dbReference type="GO" id="GO:0005886">
    <property type="term" value="C:plasma membrane"/>
    <property type="evidence" value="ECO:0000318"/>
    <property type="project" value="GO_Central"/>
</dbReference>
<dbReference type="GO" id="GO:0045202">
    <property type="term" value="C:synapse"/>
    <property type="evidence" value="ECO:0007669"/>
    <property type="project" value="GOC"/>
</dbReference>
<dbReference type="GO" id="GO:0004969">
    <property type="term" value="F:histamine receptor activity"/>
    <property type="evidence" value="ECO:0000318"/>
    <property type="project" value="GO_Central"/>
</dbReference>
<dbReference type="GO" id="GO:0030594">
    <property type="term" value="F:neurotransmitter receptor activity"/>
    <property type="evidence" value="ECO:0000318"/>
    <property type="project" value="GO_Central"/>
</dbReference>
<dbReference type="GO" id="GO:0007268">
    <property type="term" value="P:chemical synaptic transmission"/>
    <property type="evidence" value="ECO:0000318"/>
    <property type="project" value="GO_Central"/>
</dbReference>
<dbReference type="GO" id="GO:0007187">
    <property type="term" value="P:G protein-coupled receptor signaling pathway, coupled to cyclic nucleotide second messenger"/>
    <property type="evidence" value="ECO:0000318"/>
    <property type="project" value="GO_Central"/>
</dbReference>
<dbReference type="GO" id="GO:0001696">
    <property type="term" value="P:gastric acid secretion"/>
    <property type="evidence" value="ECO:0007669"/>
    <property type="project" value="InterPro"/>
</dbReference>
<dbReference type="GO" id="GO:0045907">
    <property type="term" value="P:positive regulation of vasoconstriction"/>
    <property type="evidence" value="ECO:0007669"/>
    <property type="project" value="InterPro"/>
</dbReference>
<dbReference type="CDD" id="cd15051">
    <property type="entry name" value="7tmA_Histamine_H2R"/>
    <property type="match status" value="1"/>
</dbReference>
<dbReference type="FunFam" id="1.20.1070.10:FF:000121">
    <property type="entry name" value="Histamine H2 receptor"/>
    <property type="match status" value="1"/>
</dbReference>
<dbReference type="Gene3D" id="1.20.1070.10">
    <property type="entry name" value="Rhodopsin 7-helix transmembrane proteins"/>
    <property type="match status" value="1"/>
</dbReference>
<dbReference type="InterPro" id="IPR000276">
    <property type="entry name" value="GPCR_Rhodpsn"/>
</dbReference>
<dbReference type="InterPro" id="IPR017452">
    <property type="entry name" value="GPCR_Rhodpsn_7TM"/>
</dbReference>
<dbReference type="InterPro" id="IPR000503">
    <property type="entry name" value="Histamine_H2_rcpt"/>
</dbReference>
<dbReference type="PANTHER" id="PTHR24247">
    <property type="entry name" value="5-HYDROXYTRYPTAMINE RECEPTOR"/>
    <property type="match status" value="1"/>
</dbReference>
<dbReference type="PANTHER" id="PTHR24247:SF278">
    <property type="entry name" value="HISTAMINE H2 RECEPTOR"/>
    <property type="match status" value="1"/>
</dbReference>
<dbReference type="Pfam" id="PF00001">
    <property type="entry name" value="7tm_1"/>
    <property type="match status" value="1"/>
</dbReference>
<dbReference type="PRINTS" id="PR00237">
    <property type="entry name" value="GPCRRHODOPSN"/>
</dbReference>
<dbReference type="PRINTS" id="PR00531">
    <property type="entry name" value="HISTAMINEH2R"/>
</dbReference>
<dbReference type="SMART" id="SM01381">
    <property type="entry name" value="7TM_GPCR_Srsx"/>
    <property type="match status" value="1"/>
</dbReference>
<dbReference type="SUPFAM" id="SSF81321">
    <property type="entry name" value="Family A G protein-coupled receptor-like"/>
    <property type="match status" value="1"/>
</dbReference>
<dbReference type="PROSITE" id="PS00237">
    <property type="entry name" value="G_PROTEIN_RECEP_F1_1"/>
    <property type="match status" value="1"/>
</dbReference>
<dbReference type="PROSITE" id="PS50262">
    <property type="entry name" value="G_PROTEIN_RECEP_F1_2"/>
    <property type="match status" value="1"/>
</dbReference>
<sequence>MAPNGTASSFCLDSTACKITITVVLAVLILITVAGNVVVCLAVGLNRRLRNLTNCFIVSLAITDLLLGLLVLPFSAIYQLSCKWSFGKVFCNIYTSLDVMLCTASILNLFMISLDRYCAVMDPLRYPVLVTPVRVAISLVLIWVISITLSFLSIHLGWNSRNETSKGNHTTSKCKVQVNEVYGLVDGLVTFYLPLLIMCITYYRIFKVARDQAKRINHISSWKAATIREHKATVTLAAVMGAFIICWFPYFTAFVYRGLRGDDAINEVLEAIVLWLGYANSALNPILYAALNRDFRTGYQQLFCCRLANRNSHKTSLRSNASQLSRTQSREPRQQEEKPLKLQVWSGTEVTAPQGATDR</sequence>
<name>HRH2_GORGO</name>
<protein>
    <recommendedName>
        <fullName>Histamine H2 receptor</fullName>
        <shortName>H2R</shortName>
        <shortName>HH2R</shortName>
    </recommendedName>
    <alternativeName>
        <fullName>Gastric receptor I</fullName>
    </alternativeName>
</protein>
<keyword id="KW-1003">Cell membrane</keyword>
<keyword id="KW-1015">Disulfide bond</keyword>
<keyword id="KW-0297">G-protein coupled receptor</keyword>
<keyword id="KW-0325">Glycoprotein</keyword>
<keyword id="KW-0449">Lipoprotein</keyword>
<keyword id="KW-0472">Membrane</keyword>
<keyword id="KW-0564">Palmitate</keyword>
<keyword id="KW-0675">Receptor</keyword>
<keyword id="KW-1185">Reference proteome</keyword>
<keyword id="KW-0807">Transducer</keyword>
<keyword id="KW-0812">Transmembrane</keyword>
<keyword id="KW-1133">Transmembrane helix</keyword>
<feature type="chain" id="PRO_0000069683" description="Histamine H2 receptor">
    <location>
        <begin position="1"/>
        <end position="359"/>
    </location>
</feature>
<feature type="topological domain" description="Extracellular" evidence="2">
    <location>
        <begin position="1"/>
        <end position="22"/>
    </location>
</feature>
<feature type="transmembrane region" description="Helical; Name=1" evidence="2">
    <location>
        <begin position="23"/>
        <end position="44"/>
    </location>
</feature>
<feature type="topological domain" description="Cytoplasmic" evidence="2">
    <location>
        <begin position="45"/>
        <end position="57"/>
    </location>
</feature>
<feature type="transmembrane region" description="Helical; Name=2" evidence="2">
    <location>
        <begin position="58"/>
        <end position="81"/>
    </location>
</feature>
<feature type="topological domain" description="Extracellular" evidence="2">
    <location>
        <begin position="82"/>
        <end position="92"/>
    </location>
</feature>
<feature type="transmembrane region" description="Helical; Name=3" evidence="2">
    <location>
        <begin position="93"/>
        <end position="114"/>
    </location>
</feature>
<feature type="topological domain" description="Cytoplasmic" evidence="2">
    <location>
        <begin position="115"/>
        <end position="134"/>
    </location>
</feature>
<feature type="transmembrane region" description="Helical; Name=4" evidence="2">
    <location>
        <begin position="135"/>
        <end position="159"/>
    </location>
</feature>
<feature type="topological domain" description="Extracellular" evidence="2">
    <location>
        <begin position="160"/>
        <end position="180"/>
    </location>
</feature>
<feature type="transmembrane region" description="Helical; Name=5" evidence="2">
    <location>
        <begin position="181"/>
        <end position="204"/>
    </location>
</feature>
<feature type="topological domain" description="Cytoplasmic" evidence="2">
    <location>
        <begin position="205"/>
        <end position="234"/>
    </location>
</feature>
<feature type="transmembrane region" description="Helical; Name=6" evidence="2">
    <location>
        <begin position="235"/>
        <end position="258"/>
    </location>
</feature>
<feature type="topological domain" description="Extracellular" evidence="2">
    <location>
        <begin position="259"/>
        <end position="267"/>
    </location>
</feature>
<feature type="transmembrane region" description="Helical; Name=7" evidence="2">
    <location>
        <begin position="268"/>
        <end position="289"/>
    </location>
</feature>
<feature type="topological domain" description="Cytoplasmic" evidence="2">
    <location>
        <begin position="290"/>
        <end position="359"/>
    </location>
</feature>
<feature type="region of interest" description="Disordered" evidence="4">
    <location>
        <begin position="316"/>
        <end position="340"/>
    </location>
</feature>
<feature type="compositionally biased region" description="Polar residues" evidence="4">
    <location>
        <begin position="317"/>
        <end position="327"/>
    </location>
</feature>
<feature type="compositionally biased region" description="Basic and acidic residues" evidence="4">
    <location>
        <begin position="328"/>
        <end position="340"/>
    </location>
</feature>
<feature type="site" description="Essential for histamine binding" evidence="1">
    <location>
        <position position="98"/>
    </location>
</feature>
<feature type="site" description="Essential for tiotidine binding and implicated in H2 selectivity" evidence="1">
    <location>
        <position position="186"/>
    </location>
</feature>
<feature type="site" description="Implicated in histamine binding" evidence="1">
    <location>
        <position position="190"/>
    </location>
</feature>
<feature type="lipid moiety-binding region" description="S-palmitoyl cysteine" evidence="1">
    <location>
        <position position="305"/>
    </location>
</feature>
<feature type="glycosylation site" description="N-linked (GlcNAc...) asparagine" evidence="2">
    <location>
        <position position="4"/>
    </location>
</feature>
<feature type="disulfide bond" evidence="3">
    <location>
        <begin position="91"/>
        <end position="174"/>
    </location>
</feature>
<accession>Q76MS7</accession>
<evidence type="ECO:0000250" key="1"/>
<evidence type="ECO:0000255" key="2"/>
<evidence type="ECO:0000255" key="3">
    <source>
        <dbReference type="PROSITE-ProRule" id="PRU00521"/>
    </source>
</evidence>
<evidence type="ECO:0000256" key="4">
    <source>
        <dbReference type="SAM" id="MobiDB-lite"/>
    </source>
</evidence>
<reference key="1">
    <citation type="journal article" date="2004" name="Mol. Biol. Evol.">
        <title>Human-specific amino acid changes found in 103 protein-coding genes.</title>
        <authorList>
            <person name="Kitano T."/>
            <person name="Liu Y.-H."/>
            <person name="Ueda S."/>
            <person name="Saitou N."/>
        </authorList>
    </citation>
    <scope>NUCLEOTIDE SEQUENCE [GENOMIC DNA]</scope>
</reference>
<proteinExistence type="inferred from homology"/>
<organism>
    <name type="scientific">Gorilla gorilla gorilla</name>
    <name type="common">Western lowland gorilla</name>
    <dbReference type="NCBI Taxonomy" id="9595"/>
    <lineage>
        <taxon>Eukaryota</taxon>
        <taxon>Metazoa</taxon>
        <taxon>Chordata</taxon>
        <taxon>Craniata</taxon>
        <taxon>Vertebrata</taxon>
        <taxon>Euteleostomi</taxon>
        <taxon>Mammalia</taxon>
        <taxon>Eutheria</taxon>
        <taxon>Euarchontoglires</taxon>
        <taxon>Primates</taxon>
        <taxon>Haplorrhini</taxon>
        <taxon>Catarrhini</taxon>
        <taxon>Hominidae</taxon>
        <taxon>Gorilla</taxon>
    </lineage>
</organism>